<keyword id="KW-0007">Acetylation</keyword>
<keyword id="KW-0067">ATP-binding</keyword>
<keyword id="KW-0963">Cytoplasm</keyword>
<keyword id="KW-0227">DNA damage</keyword>
<keyword id="KW-0234">DNA repair</keyword>
<keyword id="KW-0235">DNA replication</keyword>
<keyword id="KW-0378">Hydrolase</keyword>
<keyword id="KW-0391">Immunity</keyword>
<keyword id="KW-0399">Innate immunity</keyword>
<keyword id="KW-1017">Isopeptide bond</keyword>
<keyword id="KW-0479">Metal-binding</keyword>
<keyword id="KW-0547">Nucleotide-binding</keyword>
<keyword id="KW-0539">Nucleus</keyword>
<keyword id="KW-0597">Phosphoprotein</keyword>
<keyword id="KW-1185">Reference proteome</keyword>
<keyword id="KW-0832">Ubl conjugation</keyword>
<keyword id="KW-0862">Zinc</keyword>
<keyword id="KW-0863">Zinc-finger</keyword>
<sequence>MEVSGPEDDPFLSQLHQVQCPVCQQMMPAAHINSHLDRCLLLHPAGHAEPAAGPHRAGERAKGPSPPGAKRRRLSESSALKQPATPTAAESSEGEGEEGDDGGETESRESYDAPPTPSGARLIPDFPVARSSSPARKGLGKRPAAAAAAGSASPRSWDETEAQEEEEAGVDGDGDADVDGEDDPGHWDADAADASFGVSAGRAHPRALPAEEIRQMLEGKPLADKMRPDTLQDYIGQSRAVGQETLLRSLLETNEIPSLILWGPPGCGKTTLAHIIANNSKKHSIRFVTLSATNAKTNDVRDVIKQAQNEKSFFKRKTILFIDEIHRFNKSQQDTFLPHVECGTITLIGATTENPSFQVNTALLSRCRVIVLEKLPVEAMVTILMRAINSLGIHVLDSSRPTDPLSHSSNCSSEPSVFIEDKAVDTLAYLSDGDARTGLNGLQLAVLARLSSRKMFCKKSGQTYSPSRVLITENDVKEGLQRSHILYDRAGEEHYNCISALHKAMRGSDQNASLYWLARMLEGGEDPLYVARRLVRFASEDIGLADPSALAQAVAAYQGCHFIGMPECEVLLAQCVVYFARAPKSIEVYSAYNNVKACLRSHQGPLPPVPLHLRNAPTRLMKDLGYGKGYKYNPMYSEPVDQDYLPEELRGVDFFKQRRC</sequence>
<accession>Q8CG07</accession>
<comment type="function">
    <text evidence="3">Functions as a modulator of initiation or reinitiation events during DNA polymerase delta-mediated DNA synthesis. In the presence of ATP, stimulation of DNA polymerase delta-mediated DNA synthesis is decreased. Also plays a role in the innate immune defense against viruses. Stabilizes the RIGI dsRNA interaction and promotes RIGI 'Lys-63'-linked polyubiquitination. In turn, RIGI transmits the signal through mitochondrial MAVS.</text>
</comment>
<comment type="catalytic activity">
    <reaction evidence="3">
        <text>ATP + H2O = ADP + phosphate + H(+)</text>
        <dbReference type="Rhea" id="RHEA:13065"/>
        <dbReference type="ChEBI" id="CHEBI:15377"/>
        <dbReference type="ChEBI" id="CHEBI:15378"/>
        <dbReference type="ChEBI" id="CHEBI:30616"/>
        <dbReference type="ChEBI" id="CHEBI:43474"/>
        <dbReference type="ChEBI" id="CHEBI:456216"/>
    </reaction>
</comment>
<comment type="subunit">
    <text evidence="2 3">Forms homooligomers, possibly octamers. Directly interacts with POLD1, POLD2 and POLD4. Interacts with the N-terminal domain of WRN. Interacts (via UBZ4-type zinc finger) with monoubiquitin and polyubiquitin. Interacts with TRIM14 and PPP6C; these interactions positively regulate the RIGI signaling pathway.</text>
</comment>
<comment type="subcellular location">
    <subcellularLocation>
        <location evidence="3">Nucleus</location>
    </subcellularLocation>
    <subcellularLocation>
        <location evidence="3">Cytoplasm</location>
    </subcellularLocation>
    <text evidence="3">Colocalizes with WRN in granular structures in the nucleus.</text>
</comment>
<comment type="tissue specificity">
    <text evidence="3">Ubiquitously expressed.</text>
</comment>
<comment type="domain">
    <text evidence="3">The UBZ4-type zinc finger binds ubiquitin.</text>
</comment>
<comment type="PTM">
    <text evidence="3">Sumoylated with SUMO1 and SUMO2/3.</text>
</comment>
<comment type="similarity">
    <text evidence="6">Belongs to the AAA ATPase family. RarA/MGS1/WRNIP1 subfamily.</text>
</comment>
<dbReference type="EC" id="3.6.1.-" evidence="3"/>
<dbReference type="EMBL" id="AY136827">
    <property type="protein sequence ID" value="AAN15750.1"/>
    <property type="molecule type" value="mRNA"/>
</dbReference>
<dbReference type="EMBL" id="BC098652">
    <property type="protein sequence ID" value="AAH98652.1"/>
    <property type="molecule type" value="mRNA"/>
</dbReference>
<dbReference type="RefSeq" id="NP_758835.1">
    <property type="nucleotide sequence ID" value="NM_172332.2"/>
</dbReference>
<dbReference type="SMR" id="Q8CG07"/>
<dbReference type="FunCoup" id="Q8CG07">
    <property type="interactions" value="2699"/>
</dbReference>
<dbReference type="STRING" id="10116.ENSRNOP00000023332"/>
<dbReference type="GlyGen" id="Q8CG07">
    <property type="glycosylation" value="2 sites"/>
</dbReference>
<dbReference type="iPTMnet" id="Q8CG07"/>
<dbReference type="PhosphoSitePlus" id="Q8CG07"/>
<dbReference type="jPOST" id="Q8CG07"/>
<dbReference type="PaxDb" id="10116-ENSRNOP00000023332"/>
<dbReference type="Ensembl" id="ENSRNOT00000023332.6">
    <property type="protein sequence ID" value="ENSRNOP00000023332.5"/>
    <property type="gene ID" value="ENSRNOG00000017040.6"/>
</dbReference>
<dbReference type="GeneID" id="282835"/>
<dbReference type="KEGG" id="rno:282835"/>
<dbReference type="UCSC" id="RGD:628836">
    <property type="organism name" value="rat"/>
</dbReference>
<dbReference type="AGR" id="RGD:628836"/>
<dbReference type="CTD" id="56897"/>
<dbReference type="RGD" id="628836">
    <property type="gene designation" value="Wrnip1"/>
</dbReference>
<dbReference type="eggNOG" id="KOG2028">
    <property type="taxonomic scope" value="Eukaryota"/>
</dbReference>
<dbReference type="InParanoid" id="Q8CG07"/>
<dbReference type="OMA" id="RIILSQC"/>
<dbReference type="OrthoDB" id="10265467at2759"/>
<dbReference type="PhylomeDB" id="Q8CG07"/>
<dbReference type="TreeFam" id="TF324547"/>
<dbReference type="PRO" id="PR:Q8CG07"/>
<dbReference type="Proteomes" id="UP000002494">
    <property type="component" value="Chromosome 17"/>
</dbReference>
<dbReference type="GO" id="GO:0000781">
    <property type="term" value="C:chromosome, telomeric region"/>
    <property type="evidence" value="ECO:0000266"/>
    <property type="project" value="RGD"/>
</dbReference>
<dbReference type="GO" id="GO:0005634">
    <property type="term" value="C:nucleus"/>
    <property type="evidence" value="ECO:0000250"/>
    <property type="project" value="UniProtKB"/>
</dbReference>
<dbReference type="GO" id="GO:0048471">
    <property type="term" value="C:perinuclear region of cytoplasm"/>
    <property type="evidence" value="ECO:0000266"/>
    <property type="project" value="RGD"/>
</dbReference>
<dbReference type="GO" id="GO:0005524">
    <property type="term" value="F:ATP binding"/>
    <property type="evidence" value="ECO:0007669"/>
    <property type="project" value="UniProtKB-KW"/>
</dbReference>
<dbReference type="GO" id="GO:0016887">
    <property type="term" value="F:ATP hydrolysis activity"/>
    <property type="evidence" value="ECO:0000250"/>
    <property type="project" value="UniProtKB"/>
</dbReference>
<dbReference type="GO" id="GO:0003677">
    <property type="term" value="F:DNA binding"/>
    <property type="evidence" value="ECO:0007669"/>
    <property type="project" value="InterPro"/>
</dbReference>
<dbReference type="GO" id="GO:0008047">
    <property type="term" value="F:enzyme activator activity"/>
    <property type="evidence" value="ECO:0000318"/>
    <property type="project" value="GO_Central"/>
</dbReference>
<dbReference type="GO" id="GO:0042802">
    <property type="term" value="F:identical protein binding"/>
    <property type="evidence" value="ECO:0000266"/>
    <property type="project" value="RGD"/>
</dbReference>
<dbReference type="GO" id="GO:0017116">
    <property type="term" value="F:single-stranded DNA helicase activity"/>
    <property type="evidence" value="ECO:0000318"/>
    <property type="project" value="GO_Central"/>
</dbReference>
<dbReference type="GO" id="GO:0008270">
    <property type="term" value="F:zinc ion binding"/>
    <property type="evidence" value="ECO:0007669"/>
    <property type="project" value="UniProtKB-KW"/>
</dbReference>
<dbReference type="GO" id="GO:0000731">
    <property type="term" value="P:DNA synthesis involved in DNA repair"/>
    <property type="evidence" value="ECO:0000250"/>
    <property type="project" value="UniProtKB"/>
</dbReference>
<dbReference type="GO" id="GO:0006261">
    <property type="term" value="P:DNA-templated DNA replication"/>
    <property type="evidence" value="ECO:0000318"/>
    <property type="project" value="GO_Central"/>
</dbReference>
<dbReference type="GO" id="GO:0045087">
    <property type="term" value="P:innate immune response"/>
    <property type="evidence" value="ECO:0007669"/>
    <property type="project" value="UniProtKB-KW"/>
</dbReference>
<dbReference type="GO" id="GO:0030174">
    <property type="term" value="P:regulation of DNA-templated DNA replication initiation"/>
    <property type="evidence" value="ECO:0000250"/>
    <property type="project" value="UniProtKB"/>
</dbReference>
<dbReference type="CDD" id="cd00009">
    <property type="entry name" value="AAA"/>
    <property type="match status" value="1"/>
</dbReference>
<dbReference type="CDD" id="cd18139">
    <property type="entry name" value="HLD_clamp_RarA"/>
    <property type="match status" value="1"/>
</dbReference>
<dbReference type="FunFam" id="1.10.3710.10:FF:000002">
    <property type="entry name" value="ATPase WRNIP1 isoform 1"/>
    <property type="match status" value="1"/>
</dbReference>
<dbReference type="FunFam" id="1.10.8.60:FF:000054">
    <property type="entry name" value="ATPase WRNIP1 isoform 1"/>
    <property type="match status" value="1"/>
</dbReference>
<dbReference type="FunFam" id="3.30.160.60:FF:000331">
    <property type="entry name" value="E3 ubiquitin-protein ligase RAD18"/>
    <property type="match status" value="1"/>
</dbReference>
<dbReference type="FunFam" id="1.20.272.10:FF:000001">
    <property type="entry name" value="Putative AAA family ATPase"/>
    <property type="match status" value="1"/>
</dbReference>
<dbReference type="FunFam" id="3.40.50.300:FF:000137">
    <property type="entry name" value="Replication-associated recombination protein A"/>
    <property type="match status" value="1"/>
</dbReference>
<dbReference type="Gene3D" id="1.10.8.60">
    <property type="match status" value="1"/>
</dbReference>
<dbReference type="Gene3D" id="1.20.272.10">
    <property type="match status" value="1"/>
</dbReference>
<dbReference type="Gene3D" id="3.30.160.60">
    <property type="entry name" value="Classic Zinc Finger"/>
    <property type="match status" value="1"/>
</dbReference>
<dbReference type="Gene3D" id="1.10.3710.10">
    <property type="entry name" value="DNA polymerase III clamp loader subunits, C-terminal domain"/>
    <property type="match status" value="1"/>
</dbReference>
<dbReference type="Gene3D" id="3.40.50.300">
    <property type="entry name" value="P-loop containing nucleotide triphosphate hydrolases"/>
    <property type="match status" value="1"/>
</dbReference>
<dbReference type="InterPro" id="IPR003593">
    <property type="entry name" value="AAA+_ATPase"/>
</dbReference>
<dbReference type="InterPro" id="IPR032423">
    <property type="entry name" value="AAA_assoc_2"/>
</dbReference>
<dbReference type="InterPro" id="IPR051314">
    <property type="entry name" value="AAA_ATPase_RarA/MGS1/WRNIP1"/>
</dbReference>
<dbReference type="InterPro" id="IPR003959">
    <property type="entry name" value="ATPase_AAA_core"/>
</dbReference>
<dbReference type="InterPro" id="IPR008921">
    <property type="entry name" value="DNA_pol3_clamp-load_cplx_C"/>
</dbReference>
<dbReference type="InterPro" id="IPR021886">
    <property type="entry name" value="MgsA_C"/>
</dbReference>
<dbReference type="InterPro" id="IPR027417">
    <property type="entry name" value="P-loop_NTPase"/>
</dbReference>
<dbReference type="InterPro" id="IPR006642">
    <property type="entry name" value="Rad18_UBZ4"/>
</dbReference>
<dbReference type="InterPro" id="IPR040539">
    <property type="entry name" value="Znf-WRNIP1_ubi"/>
</dbReference>
<dbReference type="PANTHER" id="PTHR13779:SF7">
    <property type="entry name" value="ATPASE WRNIP1"/>
    <property type="match status" value="1"/>
</dbReference>
<dbReference type="PANTHER" id="PTHR13779">
    <property type="entry name" value="WERNER HELICASE-INTERACTING PROTEIN 1 FAMILY MEMBER"/>
    <property type="match status" value="1"/>
</dbReference>
<dbReference type="Pfam" id="PF00004">
    <property type="entry name" value="AAA"/>
    <property type="match status" value="1"/>
</dbReference>
<dbReference type="Pfam" id="PF16193">
    <property type="entry name" value="AAA_assoc_2"/>
    <property type="match status" value="1"/>
</dbReference>
<dbReference type="Pfam" id="PF12002">
    <property type="entry name" value="MgsA_C"/>
    <property type="match status" value="1"/>
</dbReference>
<dbReference type="Pfam" id="PF18279">
    <property type="entry name" value="zf-WRNIP1_ubi"/>
    <property type="match status" value="1"/>
</dbReference>
<dbReference type="SMART" id="SM00382">
    <property type="entry name" value="AAA"/>
    <property type="match status" value="1"/>
</dbReference>
<dbReference type="SMART" id="SM00734">
    <property type="entry name" value="ZnF_Rad18"/>
    <property type="match status" value="1"/>
</dbReference>
<dbReference type="SUPFAM" id="SSF52540">
    <property type="entry name" value="P-loop containing nucleoside triphosphate hydrolases"/>
    <property type="match status" value="1"/>
</dbReference>
<dbReference type="SUPFAM" id="SSF48019">
    <property type="entry name" value="post-AAA+ oligomerization domain-like"/>
    <property type="match status" value="1"/>
</dbReference>
<dbReference type="PROSITE" id="PS51908">
    <property type="entry name" value="ZF_UBZ4"/>
    <property type="match status" value="1"/>
</dbReference>
<gene>
    <name evidence="3" type="primary">Wrnip1</name>
    <name evidence="7 8" type="synonym">Wrnip</name>
</gene>
<name>WRIP1_RAT</name>
<proteinExistence type="evidence at protein level"/>
<evidence type="ECO:0000250" key="1">
    <source>
        <dbReference type="UniProtKB" id="P55072"/>
    </source>
</evidence>
<evidence type="ECO:0000250" key="2">
    <source>
        <dbReference type="UniProtKB" id="Q91XU0"/>
    </source>
</evidence>
<evidence type="ECO:0000250" key="3">
    <source>
        <dbReference type="UniProtKB" id="Q96S55"/>
    </source>
</evidence>
<evidence type="ECO:0000255" key="4">
    <source>
        <dbReference type="PROSITE-ProRule" id="PRU01256"/>
    </source>
</evidence>
<evidence type="ECO:0000256" key="5">
    <source>
        <dbReference type="SAM" id="MobiDB-lite"/>
    </source>
</evidence>
<evidence type="ECO:0000305" key="6"/>
<evidence type="ECO:0000312" key="7">
    <source>
        <dbReference type="EMBL" id="AAN15750.1"/>
    </source>
</evidence>
<evidence type="ECO:0000312" key="8">
    <source>
        <dbReference type="RGD" id="628836"/>
    </source>
</evidence>
<evidence type="ECO:0007744" key="9">
    <source>
    </source>
</evidence>
<feature type="chain" id="PRO_0000084787" description="ATPase WRNIP1">
    <location>
        <begin position="1"/>
        <end position="660"/>
    </location>
</feature>
<feature type="zinc finger region" description="UBZ4-type" evidence="4">
    <location>
        <begin position="17"/>
        <end position="44"/>
    </location>
</feature>
<feature type="region of interest" description="Disordered" evidence="5">
    <location>
        <begin position="50"/>
        <end position="191"/>
    </location>
</feature>
<feature type="compositionally biased region" description="Polar residues" evidence="5">
    <location>
        <begin position="76"/>
        <end position="89"/>
    </location>
</feature>
<feature type="compositionally biased region" description="Acidic residues" evidence="5">
    <location>
        <begin position="92"/>
        <end position="104"/>
    </location>
</feature>
<feature type="compositionally biased region" description="Low complexity" evidence="5">
    <location>
        <begin position="135"/>
        <end position="155"/>
    </location>
</feature>
<feature type="compositionally biased region" description="Acidic residues" evidence="5">
    <location>
        <begin position="159"/>
        <end position="182"/>
    </location>
</feature>
<feature type="binding site" evidence="4">
    <location>
        <position position="20"/>
    </location>
    <ligand>
        <name>Zn(2+)</name>
        <dbReference type="ChEBI" id="CHEBI:29105"/>
    </ligand>
</feature>
<feature type="binding site" evidence="4">
    <location>
        <position position="23"/>
    </location>
    <ligand>
        <name>Zn(2+)</name>
        <dbReference type="ChEBI" id="CHEBI:29105"/>
    </ligand>
</feature>
<feature type="binding site" evidence="3">
    <location>
        <position position="31"/>
    </location>
    <ligand>
        <name>Zn(2+)</name>
        <dbReference type="ChEBI" id="CHEBI:29105"/>
    </ligand>
</feature>
<feature type="binding site" evidence="4">
    <location>
        <position position="35"/>
    </location>
    <ligand>
        <name>Zn(2+)</name>
        <dbReference type="ChEBI" id="CHEBI:29105"/>
    </ligand>
</feature>
<feature type="binding site" evidence="4">
    <location>
        <position position="39"/>
    </location>
    <ligand>
        <name>Zn(2+)</name>
        <dbReference type="ChEBI" id="CHEBI:29105"/>
    </ligand>
</feature>
<feature type="binding site" evidence="1">
    <location>
        <begin position="265"/>
        <end position="271"/>
    </location>
    <ligand>
        <name>ATP</name>
        <dbReference type="ChEBI" id="CHEBI:30616"/>
    </ligand>
</feature>
<feature type="modified residue" description="Phosphoserine" evidence="3">
    <location>
        <position position="65"/>
    </location>
</feature>
<feature type="modified residue" description="Phosphoserine" evidence="9">
    <location>
        <position position="75"/>
    </location>
</feature>
<feature type="modified residue" description="Phosphothreonine" evidence="3">
    <location>
        <position position="85"/>
    </location>
</feature>
<feature type="modified residue" description="Phosphoserine" evidence="9">
    <location>
        <position position="91"/>
    </location>
</feature>
<feature type="modified residue" description="Phosphoserine" evidence="9">
    <location>
        <position position="92"/>
    </location>
</feature>
<feature type="modified residue" description="Phosphothreonine" evidence="3">
    <location>
        <position position="116"/>
    </location>
</feature>
<feature type="modified residue" description="Phosphoserine" evidence="9">
    <location>
        <position position="153"/>
    </location>
</feature>
<feature type="modified residue" description="Phosphotyrosine" evidence="3">
    <location>
        <position position="529"/>
    </location>
</feature>
<feature type="modified residue" description="Phosphotyrosine" evidence="3">
    <location>
        <position position="557"/>
    </location>
</feature>
<feature type="modified residue" description="N6-acetyllysine; alternate" evidence="3">
    <location>
        <position position="628"/>
    </location>
</feature>
<feature type="cross-link" description="Glycyl lysine isopeptide (Lys-Gly) (interchain with G-Cter in ubiquitin)" evidence="3">
    <location>
        <position position="81"/>
    </location>
</feature>
<feature type="cross-link" description="Glycyl lysine isopeptide (Lys-Gly) (interchain with G-Cter in ubiquitin)" evidence="3">
    <location>
        <position position="141"/>
    </location>
</feature>
<feature type="cross-link" description="Glycyl lysine isopeptide (Lys-Gly) (interchain with G-Cter in ubiquitin)" evidence="3">
    <location>
        <position position="220"/>
    </location>
</feature>
<feature type="cross-link" description="Glycyl lysine isopeptide (Lys-Gly) (interchain with G-Cter in ubiquitin)" evidence="3">
    <location>
        <position position="296"/>
    </location>
</feature>
<feature type="cross-link" description="Glycyl lysine isopeptide (Lys-Gly) (interchain with G-Cter in ubiquitin)" evidence="3">
    <location>
        <position position="305"/>
    </location>
</feature>
<feature type="cross-link" description="Glycyl lysine isopeptide (Lys-Gly) (interchain with G-Cter in ubiquitin)" evidence="3">
    <location>
        <position position="311"/>
    </location>
</feature>
<feature type="cross-link" description="Glycyl lysine isopeptide (Lys-Gly) (interchain with G-Cter in ubiquitin)" evidence="3">
    <location>
        <position position="317"/>
    </location>
</feature>
<feature type="cross-link" description="Glycyl lysine isopeptide (Lys-Gly) (interchain with G-Cter in ubiquitin)" evidence="3">
    <location>
        <position position="330"/>
    </location>
</feature>
<feature type="cross-link" description="Glycyl lysine isopeptide (Lys-Gly) (interchain with G-Cter in SUMO2); alternate" evidence="3">
    <location>
        <position position="477"/>
    </location>
</feature>
<feature type="cross-link" description="Glycyl lysine isopeptide (Lys-Gly) (interchain with G-Cter in ubiquitin); alternate" evidence="3">
    <location>
        <position position="477"/>
    </location>
</feature>
<feature type="cross-link" description="Glycyl lysine isopeptide (Lys-Gly) (interchain with G-Cter in ubiquitin)" evidence="3">
    <location>
        <position position="622"/>
    </location>
</feature>
<feature type="cross-link" description="Glycyl lysine isopeptide (Lys-Gly) (interchain with G-Cter in ubiquitin); alternate" evidence="3">
    <location>
        <position position="628"/>
    </location>
</feature>
<feature type="cross-link" description="Glycyl lysine isopeptide (Lys-Gly) (interchain with G-Cter in ubiquitin)" evidence="3">
    <location>
        <position position="631"/>
    </location>
</feature>
<reference evidence="7" key="1">
    <citation type="submission" date="2002-07" db="EMBL/GenBank/DDBJ databases">
        <title>Expression of sequences in balloon-injured rat arteries.</title>
        <authorList>
            <person name="Liaw L."/>
            <person name="Lindner V."/>
        </authorList>
    </citation>
    <scope>NUCLEOTIDE SEQUENCE [MRNA]</scope>
    <source>
        <strain evidence="7">Sprague-Dawley</strain>
    </source>
</reference>
<reference key="2">
    <citation type="journal article" date="2004" name="Genome Res.">
        <title>The status, quality, and expansion of the NIH full-length cDNA project: the Mammalian Gene Collection (MGC).</title>
        <authorList>
            <consortium name="The MGC Project Team"/>
        </authorList>
    </citation>
    <scope>NUCLEOTIDE SEQUENCE [LARGE SCALE MRNA]</scope>
    <source>
        <tissue>Ovary</tissue>
    </source>
</reference>
<reference key="3">
    <citation type="journal article" date="2012" name="Nat. Commun.">
        <title>Quantitative maps of protein phosphorylation sites across 14 different rat organs and tissues.</title>
        <authorList>
            <person name="Lundby A."/>
            <person name="Secher A."/>
            <person name="Lage K."/>
            <person name="Nordsborg N.B."/>
            <person name="Dmytriyev A."/>
            <person name="Lundby C."/>
            <person name="Olsen J.V."/>
        </authorList>
    </citation>
    <scope>PHOSPHORYLATION [LARGE SCALE ANALYSIS] AT SER-75; SER-91; SER-92 AND SER-153</scope>
    <scope>IDENTIFICATION BY MASS SPECTROMETRY [LARGE SCALE ANALYSIS]</scope>
</reference>
<organism>
    <name type="scientific">Rattus norvegicus</name>
    <name type="common">Rat</name>
    <dbReference type="NCBI Taxonomy" id="10116"/>
    <lineage>
        <taxon>Eukaryota</taxon>
        <taxon>Metazoa</taxon>
        <taxon>Chordata</taxon>
        <taxon>Craniata</taxon>
        <taxon>Vertebrata</taxon>
        <taxon>Euteleostomi</taxon>
        <taxon>Mammalia</taxon>
        <taxon>Eutheria</taxon>
        <taxon>Euarchontoglires</taxon>
        <taxon>Glires</taxon>
        <taxon>Rodentia</taxon>
        <taxon>Myomorpha</taxon>
        <taxon>Muroidea</taxon>
        <taxon>Muridae</taxon>
        <taxon>Murinae</taxon>
        <taxon>Rattus</taxon>
    </lineage>
</organism>
<protein>
    <recommendedName>
        <fullName>ATPase WRNIP1</fullName>
        <ecNumber evidence="3">3.6.1.-</ecNumber>
    </recommendedName>
    <alternativeName>
        <fullName>Werner helicase-interacting protein 1</fullName>
    </alternativeName>
</protein>